<comment type="function">
    <text evidence="1">Catalyzes carboxymethyl transfer from carboxy-S-adenosyl-L-methionine (Cx-SAM) to 5-hydroxyuridine (ho5U) to form 5-carboxymethoxyuridine (cmo5U) at position 34 in tRNAs.</text>
</comment>
<comment type="catalytic activity">
    <reaction evidence="1">
        <text>carboxy-S-adenosyl-L-methionine + 5-hydroxyuridine(34) in tRNA = 5-carboxymethoxyuridine(34) in tRNA + S-adenosyl-L-homocysteine + H(+)</text>
        <dbReference type="Rhea" id="RHEA:52848"/>
        <dbReference type="Rhea" id="RHEA-COMP:13381"/>
        <dbReference type="Rhea" id="RHEA-COMP:13383"/>
        <dbReference type="ChEBI" id="CHEBI:15378"/>
        <dbReference type="ChEBI" id="CHEBI:57856"/>
        <dbReference type="ChEBI" id="CHEBI:134278"/>
        <dbReference type="ChEBI" id="CHEBI:136877"/>
        <dbReference type="ChEBI" id="CHEBI:136879"/>
    </reaction>
</comment>
<comment type="subunit">
    <text evidence="1">Homotetramer.</text>
</comment>
<comment type="similarity">
    <text evidence="1">Belongs to the class I-like SAM-binding methyltransferase superfamily. CmoB family.</text>
</comment>
<evidence type="ECO:0000255" key="1">
    <source>
        <dbReference type="HAMAP-Rule" id="MF_01590"/>
    </source>
</evidence>
<reference key="1">
    <citation type="submission" date="2008-02" db="EMBL/GenBank/DDBJ databases">
        <title>Complete sequence of Yersinia pseudotuberculosis YPIII.</title>
        <authorList>
            <consortium name="US DOE Joint Genome Institute"/>
            <person name="Copeland A."/>
            <person name="Lucas S."/>
            <person name="Lapidus A."/>
            <person name="Glavina del Rio T."/>
            <person name="Dalin E."/>
            <person name="Tice H."/>
            <person name="Bruce D."/>
            <person name="Goodwin L."/>
            <person name="Pitluck S."/>
            <person name="Munk A.C."/>
            <person name="Brettin T."/>
            <person name="Detter J.C."/>
            <person name="Han C."/>
            <person name="Tapia R."/>
            <person name="Schmutz J."/>
            <person name="Larimer F."/>
            <person name="Land M."/>
            <person name="Hauser L."/>
            <person name="Challacombe J.F."/>
            <person name="Green L."/>
            <person name="Lindler L.E."/>
            <person name="Nikolich M.P."/>
            <person name="Richardson P."/>
        </authorList>
    </citation>
    <scope>NUCLEOTIDE SEQUENCE [LARGE SCALE GENOMIC DNA]</scope>
    <source>
        <strain>YPIII</strain>
    </source>
</reference>
<accession>B1JLL9</accession>
<feature type="chain" id="PRO_1000201318" description="tRNA U34 carboxymethyltransferase">
    <location>
        <begin position="1"/>
        <end position="323"/>
    </location>
</feature>
<feature type="binding site" evidence="1">
    <location>
        <position position="91"/>
    </location>
    <ligand>
        <name>carboxy-S-adenosyl-L-methionine</name>
        <dbReference type="ChEBI" id="CHEBI:134278"/>
    </ligand>
</feature>
<feature type="binding site" evidence="1">
    <location>
        <position position="105"/>
    </location>
    <ligand>
        <name>carboxy-S-adenosyl-L-methionine</name>
        <dbReference type="ChEBI" id="CHEBI:134278"/>
    </ligand>
</feature>
<feature type="binding site" evidence="1">
    <location>
        <position position="110"/>
    </location>
    <ligand>
        <name>carboxy-S-adenosyl-L-methionine</name>
        <dbReference type="ChEBI" id="CHEBI:134278"/>
    </ligand>
</feature>
<feature type="binding site" evidence="1">
    <location>
        <position position="130"/>
    </location>
    <ligand>
        <name>carboxy-S-adenosyl-L-methionine</name>
        <dbReference type="ChEBI" id="CHEBI:134278"/>
    </ligand>
</feature>
<feature type="binding site" evidence="1">
    <location>
        <begin position="181"/>
        <end position="182"/>
    </location>
    <ligand>
        <name>carboxy-S-adenosyl-L-methionine</name>
        <dbReference type="ChEBI" id="CHEBI:134278"/>
    </ligand>
</feature>
<feature type="binding site" evidence="1">
    <location>
        <position position="196"/>
    </location>
    <ligand>
        <name>carboxy-S-adenosyl-L-methionine</name>
        <dbReference type="ChEBI" id="CHEBI:134278"/>
    </ligand>
</feature>
<feature type="binding site" evidence="1">
    <location>
        <position position="200"/>
    </location>
    <ligand>
        <name>carboxy-S-adenosyl-L-methionine</name>
        <dbReference type="ChEBI" id="CHEBI:134278"/>
    </ligand>
</feature>
<feature type="binding site" evidence="1">
    <location>
        <position position="315"/>
    </location>
    <ligand>
        <name>carboxy-S-adenosyl-L-methionine</name>
        <dbReference type="ChEBI" id="CHEBI:134278"/>
    </ligand>
</feature>
<dbReference type="EC" id="2.5.1.-" evidence="1"/>
<dbReference type="EMBL" id="CP000950">
    <property type="protein sequence ID" value="ACA68438.1"/>
    <property type="molecule type" value="Genomic_DNA"/>
</dbReference>
<dbReference type="RefSeq" id="WP_012304109.1">
    <property type="nucleotide sequence ID" value="NZ_CP009792.1"/>
</dbReference>
<dbReference type="SMR" id="B1JLL9"/>
<dbReference type="KEGG" id="ypy:YPK_2152"/>
<dbReference type="PATRIC" id="fig|502800.11.peg.2826"/>
<dbReference type="GO" id="GO:0008168">
    <property type="term" value="F:methyltransferase activity"/>
    <property type="evidence" value="ECO:0007669"/>
    <property type="project" value="TreeGrafter"/>
</dbReference>
<dbReference type="GO" id="GO:0016765">
    <property type="term" value="F:transferase activity, transferring alkyl or aryl (other than methyl) groups"/>
    <property type="evidence" value="ECO:0007669"/>
    <property type="project" value="UniProtKB-UniRule"/>
</dbReference>
<dbReference type="GO" id="GO:0002098">
    <property type="term" value="P:tRNA wobble uridine modification"/>
    <property type="evidence" value="ECO:0007669"/>
    <property type="project" value="InterPro"/>
</dbReference>
<dbReference type="CDD" id="cd02440">
    <property type="entry name" value="AdoMet_MTases"/>
    <property type="match status" value="1"/>
</dbReference>
<dbReference type="Gene3D" id="3.40.50.150">
    <property type="entry name" value="Vaccinia Virus protein VP39"/>
    <property type="match status" value="1"/>
</dbReference>
<dbReference type="HAMAP" id="MF_01590">
    <property type="entry name" value="tRNA_carboxymethyltr_CmoB"/>
    <property type="match status" value="1"/>
</dbReference>
<dbReference type="InterPro" id="IPR010017">
    <property type="entry name" value="CmoB"/>
</dbReference>
<dbReference type="InterPro" id="IPR027555">
    <property type="entry name" value="Mo5U34_MeTrfas-like"/>
</dbReference>
<dbReference type="InterPro" id="IPR029063">
    <property type="entry name" value="SAM-dependent_MTases_sf"/>
</dbReference>
<dbReference type="NCBIfam" id="NF011650">
    <property type="entry name" value="PRK15068.1"/>
    <property type="match status" value="1"/>
</dbReference>
<dbReference type="NCBIfam" id="TIGR00452">
    <property type="entry name" value="tRNA 5-methoxyuridine(34)/uridine 5-oxyacetic acid(34) synthase CmoB"/>
    <property type="match status" value="1"/>
</dbReference>
<dbReference type="PANTHER" id="PTHR43464">
    <property type="entry name" value="METHYLTRANSFERASE"/>
    <property type="match status" value="1"/>
</dbReference>
<dbReference type="PANTHER" id="PTHR43464:SF95">
    <property type="entry name" value="TRNA U34 CARBOXYMETHYLTRANSFERASE"/>
    <property type="match status" value="1"/>
</dbReference>
<dbReference type="Pfam" id="PF08003">
    <property type="entry name" value="Methyltransf_9"/>
    <property type="match status" value="1"/>
</dbReference>
<dbReference type="SUPFAM" id="SSF53335">
    <property type="entry name" value="S-adenosyl-L-methionine-dependent methyltransferases"/>
    <property type="match status" value="1"/>
</dbReference>
<sequence length="323" mass="36580">MIEFGDFYRLIAKGPLSPWLDTLPAQLSAWQRESLHGKFKTWFNAVEHLPQLTPTTLDLHSGVRAEMSPPISAGQREGMENMLRALMPWRKGPFSLYGLEIDTEWRSDWKWQRVLPHISPLAGRTILDVGCGSGYHLWRMIGEGAHLAVGIDPMQLFLCQFEAIRKLLGGDQRAHVLPLGIEQLPELAAFDTVFSMGVLYHRRSPLDHLYQLKNQLVTDGELVLETLVVEGDSQQVLVPGDRYAQMRNVYFIPSAPALKAWLEKCGFVDVRIADMAVTTTEEQRRTDWMTSESLAEFLDPHDHSKTVEGYPAPLRAVLIARKP</sequence>
<protein>
    <recommendedName>
        <fullName evidence="1">tRNA U34 carboxymethyltransferase</fullName>
        <ecNumber evidence="1">2.5.1.-</ecNumber>
    </recommendedName>
</protein>
<proteinExistence type="inferred from homology"/>
<organism>
    <name type="scientific">Yersinia pseudotuberculosis serotype O:3 (strain YPIII)</name>
    <dbReference type="NCBI Taxonomy" id="502800"/>
    <lineage>
        <taxon>Bacteria</taxon>
        <taxon>Pseudomonadati</taxon>
        <taxon>Pseudomonadota</taxon>
        <taxon>Gammaproteobacteria</taxon>
        <taxon>Enterobacterales</taxon>
        <taxon>Yersiniaceae</taxon>
        <taxon>Yersinia</taxon>
    </lineage>
</organism>
<name>CMOB_YERPY</name>
<gene>
    <name evidence="1" type="primary">cmoB</name>
    <name type="ordered locus">YPK_2152</name>
</gene>
<keyword id="KW-0808">Transferase</keyword>
<keyword id="KW-0819">tRNA processing</keyword>